<accession>Q6AYI5</accession>
<gene>
    <name type="primary">Shoc2</name>
</gene>
<dbReference type="EMBL" id="BC079032">
    <property type="protein sequence ID" value="AAH79032.1"/>
    <property type="molecule type" value="mRNA"/>
</dbReference>
<dbReference type="RefSeq" id="NP_001013173.1">
    <property type="nucleotide sequence ID" value="NM_001013155.2"/>
</dbReference>
<dbReference type="RefSeq" id="XP_038936705.1">
    <property type="nucleotide sequence ID" value="XM_039080777.2"/>
</dbReference>
<dbReference type="RefSeq" id="XP_038936712.1">
    <property type="nucleotide sequence ID" value="XM_039080784.2"/>
</dbReference>
<dbReference type="RefSeq" id="XP_038936713.1">
    <property type="nucleotide sequence ID" value="XM_039080785.2"/>
</dbReference>
<dbReference type="RefSeq" id="XP_038936716.1">
    <property type="nucleotide sequence ID" value="XM_039080788.2"/>
</dbReference>
<dbReference type="RefSeq" id="XP_038936717.1">
    <property type="nucleotide sequence ID" value="XM_039080789.2"/>
</dbReference>
<dbReference type="SMR" id="Q6AYI5"/>
<dbReference type="BioGRID" id="259419">
    <property type="interactions" value="1"/>
</dbReference>
<dbReference type="FunCoup" id="Q6AYI5">
    <property type="interactions" value="4487"/>
</dbReference>
<dbReference type="STRING" id="10116.ENSRNOP00000020580"/>
<dbReference type="PhosphoSitePlus" id="Q6AYI5"/>
<dbReference type="jPOST" id="Q6AYI5"/>
<dbReference type="PaxDb" id="10116-ENSRNOP00000020580"/>
<dbReference type="Ensembl" id="ENSRNOT00000020580.7">
    <property type="protein sequence ID" value="ENSRNOP00000020580.5"/>
    <property type="gene ID" value="ENSRNOG00000015339.7"/>
</dbReference>
<dbReference type="GeneID" id="309548"/>
<dbReference type="KEGG" id="rno:309548"/>
<dbReference type="UCSC" id="RGD:1308146">
    <property type="organism name" value="rat"/>
</dbReference>
<dbReference type="AGR" id="RGD:1308146"/>
<dbReference type="CTD" id="8036"/>
<dbReference type="RGD" id="1308146">
    <property type="gene designation" value="Shoc2"/>
</dbReference>
<dbReference type="eggNOG" id="KOG0619">
    <property type="taxonomic scope" value="Eukaryota"/>
</dbReference>
<dbReference type="GeneTree" id="ENSGT00940000156270"/>
<dbReference type="HOGENOM" id="CLU_000288_18_23_1"/>
<dbReference type="InParanoid" id="Q6AYI5"/>
<dbReference type="OMA" id="NQFTSYP"/>
<dbReference type="PhylomeDB" id="Q6AYI5"/>
<dbReference type="Reactome" id="R-RNO-5673000">
    <property type="pathway name" value="RAF activation"/>
</dbReference>
<dbReference type="PRO" id="PR:Q6AYI5"/>
<dbReference type="Proteomes" id="UP000002494">
    <property type="component" value="Chromosome 1"/>
</dbReference>
<dbReference type="Bgee" id="ENSRNOG00000015339">
    <property type="expression patterns" value="Expressed in jejunum and 19 other cell types or tissues"/>
</dbReference>
<dbReference type="GO" id="GO:0005737">
    <property type="term" value="C:cytoplasm"/>
    <property type="evidence" value="ECO:0000250"/>
    <property type="project" value="UniProtKB"/>
</dbReference>
<dbReference type="GO" id="GO:0005829">
    <property type="term" value="C:cytosol"/>
    <property type="evidence" value="ECO:0007669"/>
    <property type="project" value="Ensembl"/>
</dbReference>
<dbReference type="GO" id="GO:0005654">
    <property type="term" value="C:nucleoplasm"/>
    <property type="evidence" value="ECO:0007669"/>
    <property type="project" value="Ensembl"/>
</dbReference>
<dbReference type="GO" id="GO:0005634">
    <property type="term" value="C:nucleus"/>
    <property type="evidence" value="ECO:0000250"/>
    <property type="project" value="UniProtKB"/>
</dbReference>
<dbReference type="GO" id="GO:0000164">
    <property type="term" value="C:protein phosphatase type 1 complex"/>
    <property type="evidence" value="ECO:0000250"/>
    <property type="project" value="UniProtKB"/>
</dbReference>
<dbReference type="GO" id="GO:0008157">
    <property type="term" value="F:protein phosphatase 1 binding"/>
    <property type="evidence" value="ECO:0000266"/>
    <property type="project" value="RGD"/>
</dbReference>
<dbReference type="GO" id="GO:0019903">
    <property type="term" value="F:protein phosphatase binding"/>
    <property type="evidence" value="ECO:0000250"/>
    <property type="project" value="UniProtKB"/>
</dbReference>
<dbReference type="GO" id="GO:0005225">
    <property type="term" value="F:volume-sensitive anion channel activity"/>
    <property type="evidence" value="ECO:0000318"/>
    <property type="project" value="GO_Central"/>
</dbReference>
<dbReference type="GO" id="GO:0071378">
    <property type="term" value="P:cellular response to growth hormone stimulus"/>
    <property type="evidence" value="ECO:0000270"/>
    <property type="project" value="RGD"/>
</dbReference>
<dbReference type="GO" id="GO:0140361">
    <property type="term" value="P:cyclic-GMP-AMP transmembrane import across plasma membrane"/>
    <property type="evidence" value="ECO:0000318"/>
    <property type="project" value="GO_Central"/>
</dbReference>
<dbReference type="GO" id="GO:0035556">
    <property type="term" value="P:intracellular signal transduction"/>
    <property type="evidence" value="ECO:0000318"/>
    <property type="project" value="GO_Central"/>
</dbReference>
<dbReference type="GO" id="GO:2000178">
    <property type="term" value="P:negative regulation of neural precursor cell proliferation"/>
    <property type="evidence" value="ECO:0000315"/>
    <property type="project" value="RGD"/>
</dbReference>
<dbReference type="GO" id="GO:0045665">
    <property type="term" value="P:negative regulation of neuron differentiation"/>
    <property type="evidence" value="ECO:0000315"/>
    <property type="project" value="RGD"/>
</dbReference>
<dbReference type="GO" id="GO:0038180">
    <property type="term" value="P:nerve growth factor signaling pathway"/>
    <property type="evidence" value="ECO:0000315"/>
    <property type="project" value="RGD"/>
</dbReference>
<dbReference type="GO" id="GO:0045666">
    <property type="term" value="P:positive regulation of neuron differentiation"/>
    <property type="evidence" value="ECO:0000315"/>
    <property type="project" value="RGD"/>
</dbReference>
<dbReference type="GO" id="GO:0010976">
    <property type="term" value="P:positive regulation of neuron projection development"/>
    <property type="evidence" value="ECO:0000315"/>
    <property type="project" value="RGD"/>
</dbReference>
<dbReference type="GO" id="GO:0046579">
    <property type="term" value="P:positive regulation of Ras protein signal transduction"/>
    <property type="evidence" value="ECO:0000250"/>
    <property type="project" value="UniProtKB"/>
</dbReference>
<dbReference type="GO" id="GO:0043408">
    <property type="term" value="P:regulation of MAPK cascade"/>
    <property type="evidence" value="ECO:0000266"/>
    <property type="project" value="RGD"/>
</dbReference>
<dbReference type="FunFam" id="3.80.10.10:FF:000115">
    <property type="entry name" value="leucine-rich repeat protein SHOC-2"/>
    <property type="match status" value="1"/>
</dbReference>
<dbReference type="FunFam" id="3.80.10.10:FF:000327">
    <property type="entry name" value="leucine-rich repeat protein SHOC-2 isoform X2"/>
    <property type="match status" value="1"/>
</dbReference>
<dbReference type="FunFam" id="3.80.10.10:FF:000093">
    <property type="entry name" value="Putative leucine-rich repeat protein shoc-2"/>
    <property type="match status" value="1"/>
</dbReference>
<dbReference type="Gene3D" id="3.80.10.10">
    <property type="entry name" value="Ribonuclease Inhibitor"/>
    <property type="match status" value="4"/>
</dbReference>
<dbReference type="InterPro" id="IPR001611">
    <property type="entry name" value="Leu-rich_rpt"/>
</dbReference>
<dbReference type="InterPro" id="IPR003591">
    <property type="entry name" value="Leu-rich_rpt_typical-subtyp"/>
</dbReference>
<dbReference type="InterPro" id="IPR032675">
    <property type="entry name" value="LRR_dom_sf"/>
</dbReference>
<dbReference type="InterPro" id="IPR050216">
    <property type="entry name" value="LRR_domain-containing"/>
</dbReference>
<dbReference type="InterPro" id="IPR055414">
    <property type="entry name" value="LRR_R13L4/SHOC2-like"/>
</dbReference>
<dbReference type="PANTHER" id="PTHR48051">
    <property type="match status" value="1"/>
</dbReference>
<dbReference type="PANTHER" id="PTHR48051:SF54">
    <property type="entry name" value="LEUCINE-RICH REPEAT-CONTAINING PROTEIN"/>
    <property type="match status" value="1"/>
</dbReference>
<dbReference type="Pfam" id="PF23598">
    <property type="entry name" value="LRR_14"/>
    <property type="match status" value="2"/>
</dbReference>
<dbReference type="Pfam" id="PF13855">
    <property type="entry name" value="LRR_8"/>
    <property type="match status" value="1"/>
</dbReference>
<dbReference type="SMART" id="SM00364">
    <property type="entry name" value="LRR_BAC"/>
    <property type="match status" value="12"/>
</dbReference>
<dbReference type="SMART" id="SM00365">
    <property type="entry name" value="LRR_SD22"/>
    <property type="match status" value="6"/>
</dbReference>
<dbReference type="SMART" id="SM00369">
    <property type="entry name" value="LRR_TYP"/>
    <property type="match status" value="16"/>
</dbReference>
<dbReference type="SUPFAM" id="SSF52058">
    <property type="entry name" value="L domain-like"/>
    <property type="match status" value="2"/>
</dbReference>
<dbReference type="PROSITE" id="PS51450">
    <property type="entry name" value="LRR"/>
    <property type="match status" value="17"/>
</dbReference>
<evidence type="ECO:0000250" key="1">
    <source>
        <dbReference type="UniProtKB" id="Q9UQ13"/>
    </source>
</evidence>
<evidence type="ECO:0000256" key="2">
    <source>
        <dbReference type="SAM" id="MobiDB-lite"/>
    </source>
</evidence>
<evidence type="ECO:0000305" key="3"/>
<protein>
    <recommendedName>
        <fullName>Leucine-rich repeat protein SHOC-2</fullName>
    </recommendedName>
    <alternativeName>
        <fullName>Protein soc-2 homolog</fullName>
    </alternativeName>
    <alternativeName>
        <fullName>Protein sur-8 homolog</fullName>
    </alternativeName>
</protein>
<reference key="1">
    <citation type="journal article" date="2004" name="Genome Res.">
        <title>The status, quality, and expansion of the NIH full-length cDNA project: the Mammalian Gene Collection (MGC).</title>
        <authorList>
            <consortium name="The MGC Project Team"/>
        </authorList>
    </citation>
    <scope>NUCLEOTIDE SEQUENCE [LARGE SCALE MRNA]</scope>
    <source>
        <tissue>Testis</tissue>
    </source>
</reference>
<sequence length="582" mass="64921">MSSSLGKEKDSKEKDPKVPSAKEREKEAKASGGFGKESKEKEPKTKGKDAKDGKKESSAAQPGVAFSVDNTIKRPNPALGTRKKSSNAEVTKELNKCREENSMRLDLSKRSIHILPPSVKELTQLTELYLYSNKLQSLPAEVGCLVNLMTLALSENSLTSLPDSLDNLKKLRMLDLRHNKLREIPSVVYRLDSLTTLYLRFNRITAVEKDVRNLPRLSTLSIRENKIKQLPAEIGELCNLITLDVAHNQLEHLPKEIGNCTQITNLDLQHNELLDLPDTIGNLSSLNRLGLRYNRLSAIPRSLAKCSALEELNLENNNISTLPESLLSSLVKLNSLTLARNCFQLYPVGGPSQFSTIYSLNMEHNRINKIPFGIFSRAKVLSKLNMKDNQLTSLPLDFGTWTSMVELNLATNQLTKIPEDVSGLVSLEVLILSNNLLKKLPHGLGNLRKLRELDLEENKLESLPNEIAYLKDLQKLVLTNNQLTTLPRGIGHLTNLTHLGLGENLLTHLPEEIGTLENLEELYLNDNPNLHSLPFELALCSKLSIMSIENCPLSHLPPQIVAGGPSFIIQFLKMQGPYRAMV</sequence>
<name>SHOC2_RAT</name>
<comment type="function">
    <text evidence="1">Core component of the SHOC2-MRAS-PP1c (SMP) holophosphatase complex that regulates activation of the MAPK pathway (By similarity). Acts as a scaffolding protein in the SMP complex (By similarity). The SMP complex specifically dephosphorylates the inhibitory phosphorylation at 'Ser-259' of RAF1 kinase, 'Ser-365' of BRAF kinase and 'Ser-214' of ARAF kinase, stimulating their kinase activities (By similarity). The SMP complex enhances the dephosphorylation activity and substrate specificity of PP1c (By similarity).</text>
</comment>
<comment type="subunit">
    <text evidence="1">Component of the SHOC2-MRAS-PP1c (SMP) complex consisting of SHOC2, GTP-bound M-Ras/MRAS and the catalytic subunit of protein phosphatase 1 (either PPP1CA, PPP1CB or PPP1CC) (By similarity). SHOC2 and PP1c preferably bind M-Ras/MRAS, but they also bind K-Ras/KRAS, N-Ras/NRAS and H-Ras/HRAS; these interactions are GTP-dependent and both SHOC2 and PP1c are required to form a stable complex (By similarity). Interacts with PP1c in the absence of Ras GTPases (By similarity). Interacts with M-Ras/MRAS and RAF1 (By similarity). Interacts with ERBIN; disrupts the interaction with RAF1 and Ras, preventing the activation of the Ras signaling pathway (By similarity). Interacts with LZTR1 (By similarity).</text>
</comment>
<comment type="subcellular location">
    <subcellularLocation>
        <location evidence="1">Cytoplasm</location>
    </subcellularLocation>
    <subcellularLocation>
        <location evidence="1">Nucleus</location>
    </subcellularLocation>
    <text evidence="1">Translocates from cytoplasm to nucleus upon growth factor stimulation.</text>
</comment>
<comment type="domain">
    <text evidence="1">Contains a N-terminal RVxF motif that is important for interaction with PP1c.</text>
</comment>
<comment type="domain">
    <text evidence="1">PP1c (all isoforms) binds to the concave side of SHOC2, via LRR 2-5, 8-11, and 13-18 (By similarity). M-Ras/MRAS binds to the concave side of SHOC2, via LRR 1-10, 12 and 14-16 (By similarity).</text>
</comment>
<comment type="similarity">
    <text evidence="3">Belongs to the SHOC2 family.</text>
</comment>
<proteinExistence type="evidence at transcript level"/>
<keyword id="KW-0963">Cytoplasm</keyword>
<keyword id="KW-0433">Leucine-rich repeat</keyword>
<keyword id="KW-0539">Nucleus</keyword>
<keyword id="KW-1185">Reference proteome</keyword>
<keyword id="KW-0677">Repeat</keyword>
<organism>
    <name type="scientific">Rattus norvegicus</name>
    <name type="common">Rat</name>
    <dbReference type="NCBI Taxonomy" id="10116"/>
    <lineage>
        <taxon>Eukaryota</taxon>
        <taxon>Metazoa</taxon>
        <taxon>Chordata</taxon>
        <taxon>Craniata</taxon>
        <taxon>Vertebrata</taxon>
        <taxon>Euteleostomi</taxon>
        <taxon>Mammalia</taxon>
        <taxon>Eutheria</taxon>
        <taxon>Euarchontoglires</taxon>
        <taxon>Glires</taxon>
        <taxon>Rodentia</taxon>
        <taxon>Myomorpha</taxon>
        <taxon>Muroidea</taxon>
        <taxon>Muridae</taxon>
        <taxon>Murinae</taxon>
        <taxon>Rattus</taxon>
    </lineage>
</organism>
<feature type="chain" id="PRO_0000317422" description="Leucine-rich repeat protein SHOC-2">
    <location>
        <begin position="1"/>
        <end position="582"/>
    </location>
</feature>
<feature type="repeat" description="LRR 1" evidence="1">
    <location>
        <begin position="101"/>
        <end position="122"/>
    </location>
</feature>
<feature type="repeat" description="LRR 2" evidence="1">
    <location>
        <begin position="124"/>
        <end position="145"/>
    </location>
</feature>
<feature type="repeat" description="LRR 3" evidence="1">
    <location>
        <begin position="147"/>
        <end position="169"/>
    </location>
</feature>
<feature type="repeat" description="LRR 4" evidence="1">
    <location>
        <begin position="170"/>
        <end position="191"/>
    </location>
</feature>
<feature type="repeat" description="LRR 5" evidence="1">
    <location>
        <begin position="193"/>
        <end position="215"/>
    </location>
</feature>
<feature type="repeat" description="LRR 6" evidence="1">
    <location>
        <begin position="216"/>
        <end position="237"/>
    </location>
</feature>
<feature type="repeat" description="LRR 7" evidence="1">
    <location>
        <begin position="239"/>
        <end position="260"/>
    </location>
</feature>
<feature type="repeat" description="LRR 8" evidence="1">
    <location>
        <begin position="262"/>
        <end position="283"/>
    </location>
</feature>
<feature type="repeat" description="LRR 9" evidence="1">
    <location>
        <begin position="285"/>
        <end position="307"/>
    </location>
</feature>
<feature type="repeat" description="LRR 10" evidence="1">
    <location>
        <begin position="308"/>
        <end position="329"/>
    </location>
</feature>
<feature type="repeat" description="LRR 11" evidence="1">
    <location>
        <begin position="332"/>
        <end position="353"/>
    </location>
</feature>
<feature type="repeat" description="LRR 12" evidence="1">
    <location>
        <begin position="356"/>
        <end position="377"/>
    </location>
</feature>
<feature type="repeat" description="LRR 13" evidence="1">
    <location>
        <begin position="380"/>
        <end position="400"/>
    </location>
</feature>
<feature type="repeat" description="LRR 14" evidence="1">
    <location>
        <begin position="403"/>
        <end position="424"/>
    </location>
</feature>
<feature type="repeat" description="LRR 15" evidence="1">
    <location>
        <begin position="426"/>
        <end position="448"/>
    </location>
</feature>
<feature type="repeat" description="LRR 16" evidence="1">
    <location>
        <begin position="449"/>
        <end position="470"/>
    </location>
</feature>
<feature type="repeat" description="LRR 17" evidence="1">
    <location>
        <begin position="472"/>
        <end position="494"/>
    </location>
</feature>
<feature type="repeat" description="LRR 18" evidence="1">
    <location>
        <begin position="495"/>
        <end position="516"/>
    </location>
</feature>
<feature type="repeat" description="LRR 19" evidence="1">
    <location>
        <begin position="518"/>
        <end position="540"/>
    </location>
</feature>
<feature type="repeat" description="LRR 20" evidence="1">
    <location>
        <begin position="542"/>
        <end position="563"/>
    </location>
</feature>
<feature type="region of interest" description="Disordered" evidence="2">
    <location>
        <begin position="1"/>
        <end position="90"/>
    </location>
</feature>
<feature type="short sequence motif" description="RVxF motif; important for interaction with PP1c" evidence="1">
    <location>
        <begin position="63"/>
        <end position="66"/>
    </location>
</feature>
<feature type="compositionally biased region" description="Basic and acidic residues" evidence="2">
    <location>
        <begin position="1"/>
        <end position="29"/>
    </location>
</feature>
<feature type="compositionally biased region" description="Basic and acidic residues" evidence="2">
    <location>
        <begin position="36"/>
        <end position="57"/>
    </location>
</feature>